<feature type="transit peptide" description="Mitochondrion" evidence="5">
    <location>
        <begin position="1"/>
        <end position="21"/>
    </location>
</feature>
<feature type="chain" id="PRO_0000458186" description="Succinate dehydrogenase [ubiquinone] iron-sulfur subunit, mitochondrial" evidence="1">
    <location>
        <begin position="22"/>
        <end position="282"/>
    </location>
</feature>
<feature type="domain" description="2Fe-2S ferredoxin-type" evidence="2">
    <location>
        <begin position="39"/>
        <end position="129"/>
    </location>
</feature>
<feature type="domain" description="4Fe-4S ferredoxin-type" evidence="3">
    <location>
        <begin position="172"/>
        <end position="202"/>
    </location>
</feature>
<feature type="binding site" evidence="8 9 19 20 21 22 23 24 25 26 27 28 29 30">
    <location>
        <position position="89"/>
    </location>
    <ligand>
        <name>[2Fe-2S] cluster</name>
        <dbReference type="ChEBI" id="CHEBI:190135"/>
    </ligand>
</feature>
<feature type="binding site" evidence="8 9 19 20 21 22 23 24 25 26 27 28 29 30">
    <location>
        <position position="94"/>
    </location>
    <ligand>
        <name>[2Fe-2S] cluster</name>
        <dbReference type="ChEBI" id="CHEBI:190135"/>
    </ligand>
</feature>
<feature type="binding site" evidence="8 9 19 20 21 22 23 24 25 26 27 28 29 30">
    <location>
        <position position="97"/>
    </location>
    <ligand>
        <name>[2Fe-2S] cluster</name>
        <dbReference type="ChEBI" id="CHEBI:190135"/>
    </ligand>
</feature>
<feature type="binding site" evidence="8 9 19 20 21 22 23 24 25 26 27 28 29 30">
    <location>
        <position position="109"/>
    </location>
    <ligand>
        <name>[2Fe-2S] cluster</name>
        <dbReference type="ChEBI" id="CHEBI:190135"/>
    </ligand>
</feature>
<feature type="binding site" evidence="8 9 19 20 21 22 23 24 25 26 27 28 29 30">
    <location>
        <position position="182"/>
    </location>
    <ligand>
        <name>[4Fe-4S] cluster</name>
        <dbReference type="ChEBI" id="CHEBI:49883"/>
    </ligand>
</feature>
<feature type="binding site" evidence="8 9 19 20 21 22 23 24 25 26 27 28 29 30">
    <location>
        <position position="185"/>
    </location>
    <ligand>
        <name>[4Fe-4S] cluster</name>
        <dbReference type="ChEBI" id="CHEBI:49883"/>
    </ligand>
</feature>
<feature type="binding site" evidence="8 9 19 20 21 22 23 24 25 26 27 28 29 30">
    <location>
        <position position="188"/>
    </location>
    <ligand>
        <name>[4Fe-4S] cluster</name>
        <dbReference type="ChEBI" id="CHEBI:49883"/>
    </ligand>
</feature>
<feature type="binding site" evidence="8 9 19 20 21 22 23 24 25 26 27 28 29 30">
    <location>
        <position position="192"/>
    </location>
    <ligand>
        <name>[3Fe-4S] cluster</name>
        <dbReference type="ChEBI" id="CHEBI:21137"/>
    </ligand>
</feature>
<feature type="binding site" evidence="16 19">
    <location>
        <position position="197"/>
    </location>
    <ligand>
        <name>a rhodoquinol</name>
        <dbReference type="ChEBI" id="CHEBI:194433"/>
        <note>ligand shared with large subunit and small subunit</note>
    </ligand>
</feature>
<feature type="binding site" evidence="16 19 30">
    <location>
        <position position="197"/>
    </location>
    <ligand>
        <name>a ubiquinone</name>
        <dbReference type="ChEBI" id="CHEBI:16389"/>
        <note>ligand shared with large subunit and small subunit</note>
    </ligand>
</feature>
<feature type="binding site" evidence="8 9 19 20 21 22 23 24 25 26 27 28 29 30">
    <location>
        <position position="239"/>
    </location>
    <ligand>
        <name>[3Fe-4S] cluster</name>
        <dbReference type="ChEBI" id="CHEBI:21137"/>
    </ligand>
</feature>
<feature type="binding site" evidence="8 9 19 20 21 22 23 24 25 26 27 28 29 30">
    <location>
        <position position="245"/>
    </location>
    <ligand>
        <name>[3Fe-4S] cluster</name>
        <dbReference type="ChEBI" id="CHEBI:21137"/>
    </ligand>
</feature>
<feature type="binding site" evidence="8 9 19 20 21 22 23 24 25 26 27 28 29 30">
    <location>
        <position position="249"/>
    </location>
    <ligand>
        <name>[4Fe-4S] cluster</name>
        <dbReference type="ChEBI" id="CHEBI:49883"/>
    </ligand>
</feature>
<feature type="strand" evidence="34">
    <location>
        <begin position="35"/>
        <end position="42"/>
    </location>
</feature>
<feature type="strand" evidence="33">
    <location>
        <begin position="47"/>
        <end position="49"/>
    </location>
</feature>
<feature type="strand" evidence="34">
    <location>
        <begin position="53"/>
        <end position="60"/>
    </location>
</feature>
<feature type="helix" evidence="34">
    <location>
        <begin position="61"/>
        <end position="63"/>
    </location>
</feature>
<feature type="helix" evidence="34">
    <location>
        <begin position="68"/>
        <end position="78"/>
    </location>
</feature>
<feature type="strand" evidence="34">
    <location>
        <begin position="90"/>
        <end position="92"/>
    </location>
</feature>
<feature type="strand" evidence="34">
    <location>
        <begin position="98"/>
        <end position="101"/>
    </location>
</feature>
<feature type="strand" evidence="34">
    <location>
        <begin position="104"/>
        <end position="107"/>
    </location>
</feature>
<feature type="helix" evidence="34">
    <location>
        <begin position="108"/>
        <end position="110"/>
    </location>
</feature>
<feature type="strand" evidence="31">
    <location>
        <begin position="117"/>
        <end position="119"/>
    </location>
</feature>
<feature type="strand" evidence="34">
    <location>
        <begin position="121"/>
        <end position="124"/>
    </location>
</feature>
<feature type="strand" evidence="34">
    <location>
        <begin position="130"/>
        <end position="133"/>
    </location>
</feature>
<feature type="strand" evidence="32">
    <location>
        <begin position="136"/>
        <end position="138"/>
    </location>
</feature>
<feature type="helix" evidence="34">
    <location>
        <begin position="140"/>
        <end position="148"/>
    </location>
</feature>
<feature type="turn" evidence="34">
    <location>
        <begin position="161"/>
        <end position="163"/>
    </location>
</feature>
<feature type="helix" evidence="34">
    <location>
        <begin position="170"/>
        <end position="173"/>
    </location>
</feature>
<feature type="helix" evidence="34">
    <location>
        <begin position="174"/>
        <end position="176"/>
    </location>
</feature>
<feature type="turn" evidence="34">
    <location>
        <begin position="177"/>
        <end position="181"/>
    </location>
</feature>
<feature type="helix" evidence="34">
    <location>
        <begin position="189"/>
        <end position="191"/>
    </location>
</feature>
<feature type="helix" evidence="34">
    <location>
        <begin position="193"/>
        <end position="198"/>
    </location>
</feature>
<feature type="turn" evidence="34">
    <location>
        <begin position="199"/>
        <end position="201"/>
    </location>
</feature>
<feature type="helix" evidence="34">
    <location>
        <begin position="204"/>
        <end position="215"/>
    </location>
</feature>
<feature type="helix" evidence="34">
    <location>
        <begin position="223"/>
        <end position="228"/>
    </location>
</feature>
<feature type="turn" evidence="34">
    <location>
        <begin position="233"/>
        <end position="238"/>
    </location>
</feature>
<feature type="helix" evidence="34">
    <location>
        <begin position="244"/>
        <end position="248"/>
    </location>
</feature>
<feature type="helix" evidence="34">
    <location>
        <begin position="255"/>
        <end position="266"/>
    </location>
</feature>
<feature type="strand" evidence="33">
    <location>
        <begin position="267"/>
        <end position="269"/>
    </location>
</feature>
<dbReference type="EC" id="1.3.5.1" evidence="5 6 7 9 10 11 12"/>
<dbReference type="EMBL" id="AB008568">
    <property type="protein sequence ID" value="BAA23716.1"/>
    <property type="molecule type" value="mRNA"/>
</dbReference>
<dbReference type="PDB" id="3VR8">
    <property type="method" value="X-ray"/>
    <property type="resolution" value="2.81 A"/>
    <property type="chains" value="B/F=1-282"/>
</dbReference>
<dbReference type="PDB" id="3VR9">
    <property type="method" value="X-ray"/>
    <property type="resolution" value="3.01 A"/>
    <property type="chains" value="B/F=1-282"/>
</dbReference>
<dbReference type="PDB" id="3VRA">
    <property type="method" value="X-ray"/>
    <property type="resolution" value="3.44 A"/>
    <property type="chains" value="B/F=1-282"/>
</dbReference>
<dbReference type="PDB" id="3VRB">
    <property type="method" value="X-ray"/>
    <property type="resolution" value="2.91 A"/>
    <property type="chains" value="B/F=1-282"/>
</dbReference>
<dbReference type="PDB" id="4YSX">
    <property type="method" value="X-ray"/>
    <property type="resolution" value="2.25 A"/>
    <property type="chains" value="B/F=1-282"/>
</dbReference>
<dbReference type="PDB" id="4YSY">
    <property type="method" value="X-ray"/>
    <property type="resolution" value="3.10 A"/>
    <property type="chains" value="B/F=1-282"/>
</dbReference>
<dbReference type="PDB" id="4YSZ">
    <property type="method" value="X-ray"/>
    <property type="resolution" value="3.30 A"/>
    <property type="chains" value="B/F=1-282"/>
</dbReference>
<dbReference type="PDB" id="4YT0">
    <property type="method" value="X-ray"/>
    <property type="resolution" value="3.66 A"/>
    <property type="chains" value="B/F=1-282"/>
</dbReference>
<dbReference type="PDB" id="4YTM">
    <property type="method" value="X-ray"/>
    <property type="resolution" value="3.40 A"/>
    <property type="chains" value="B/F=1-282"/>
</dbReference>
<dbReference type="PDB" id="4YTN">
    <property type="method" value="X-ray"/>
    <property type="resolution" value="3.00 A"/>
    <property type="chains" value="B/F=1-282"/>
</dbReference>
<dbReference type="PDB" id="5C2T">
    <property type="method" value="X-ray"/>
    <property type="resolution" value="2.75 A"/>
    <property type="chains" value="B/F=1-282"/>
</dbReference>
<dbReference type="PDB" id="5C3J">
    <property type="method" value="X-ray"/>
    <property type="resolution" value="2.80 A"/>
    <property type="chains" value="B/F=1-282"/>
</dbReference>
<dbReference type="PDBsum" id="3VR8"/>
<dbReference type="PDBsum" id="3VR9"/>
<dbReference type="PDBsum" id="3VRA"/>
<dbReference type="PDBsum" id="3VRB"/>
<dbReference type="PDBsum" id="4YSX"/>
<dbReference type="PDBsum" id="4YSY"/>
<dbReference type="PDBsum" id="4YSZ"/>
<dbReference type="PDBsum" id="4YT0"/>
<dbReference type="PDBsum" id="4YTM"/>
<dbReference type="PDBsum" id="4YTN"/>
<dbReference type="PDBsum" id="5C2T"/>
<dbReference type="PDBsum" id="5C3J"/>
<dbReference type="SMR" id="O44074"/>
<dbReference type="BioCyc" id="MetaCyc:MONOMER-18285"/>
<dbReference type="SABIO-RK" id="O44074"/>
<dbReference type="UniPathway" id="UPA00223">
    <property type="reaction ID" value="UER01006"/>
</dbReference>
<dbReference type="EvolutionaryTrace" id="O44074"/>
<dbReference type="GO" id="GO:0005743">
    <property type="term" value="C:mitochondrial inner membrane"/>
    <property type="evidence" value="ECO:0007669"/>
    <property type="project" value="UniProtKB-SubCell"/>
</dbReference>
<dbReference type="GO" id="GO:0031966">
    <property type="term" value="C:mitochondrial membrane"/>
    <property type="evidence" value="ECO:0000314"/>
    <property type="project" value="UniProtKB"/>
</dbReference>
<dbReference type="GO" id="GO:0045273">
    <property type="term" value="C:respiratory chain complex II (succinate dehydrogenase)"/>
    <property type="evidence" value="ECO:0000314"/>
    <property type="project" value="UniProtKB"/>
</dbReference>
<dbReference type="GO" id="GO:0051537">
    <property type="term" value="F:2 iron, 2 sulfur cluster binding"/>
    <property type="evidence" value="ECO:0000314"/>
    <property type="project" value="UniProtKB"/>
</dbReference>
<dbReference type="GO" id="GO:0051538">
    <property type="term" value="F:3 iron, 4 sulfur cluster binding"/>
    <property type="evidence" value="ECO:0000314"/>
    <property type="project" value="UniProtKB"/>
</dbReference>
<dbReference type="GO" id="GO:0051539">
    <property type="term" value="F:4 iron, 4 sulfur cluster binding"/>
    <property type="evidence" value="ECO:0000314"/>
    <property type="project" value="UniProtKB"/>
</dbReference>
<dbReference type="GO" id="GO:0009055">
    <property type="term" value="F:electron transfer activity"/>
    <property type="evidence" value="ECO:0007669"/>
    <property type="project" value="InterPro"/>
</dbReference>
<dbReference type="GO" id="GO:0046872">
    <property type="term" value="F:metal ion binding"/>
    <property type="evidence" value="ECO:0007669"/>
    <property type="project" value="UniProtKB-KW"/>
</dbReference>
<dbReference type="GO" id="GO:0008177">
    <property type="term" value="F:succinate dehydrogenase (quinone) activity"/>
    <property type="evidence" value="ECO:0007669"/>
    <property type="project" value="UniProtKB-EC"/>
</dbReference>
<dbReference type="GO" id="GO:0006121">
    <property type="term" value="P:mitochondrial electron transport, succinate to ubiquinone"/>
    <property type="evidence" value="ECO:0000305"/>
    <property type="project" value="UniProtKB"/>
</dbReference>
<dbReference type="GO" id="GO:0006099">
    <property type="term" value="P:tricarboxylic acid cycle"/>
    <property type="evidence" value="ECO:0007669"/>
    <property type="project" value="UniProtKB-UniPathway"/>
</dbReference>
<dbReference type="CDD" id="cd00207">
    <property type="entry name" value="fer2"/>
    <property type="match status" value="1"/>
</dbReference>
<dbReference type="FunFam" id="1.10.1060.10:FF:000029">
    <property type="entry name" value="Succinate dehydrogenase [ubiquinone] iron-sulfur subunit, mitochondrial"/>
    <property type="match status" value="1"/>
</dbReference>
<dbReference type="FunFam" id="3.10.20.30:FF:000007">
    <property type="entry name" value="Succinate dehydrogenase [ubiquinone] iron-sulfur subunit, mitochondrial"/>
    <property type="match status" value="1"/>
</dbReference>
<dbReference type="Gene3D" id="3.10.20.30">
    <property type="match status" value="1"/>
</dbReference>
<dbReference type="Gene3D" id="1.10.1060.10">
    <property type="entry name" value="Alpha-helical ferredoxin"/>
    <property type="match status" value="1"/>
</dbReference>
<dbReference type="InterPro" id="IPR036010">
    <property type="entry name" value="2Fe-2S_ferredoxin-like_sf"/>
</dbReference>
<dbReference type="InterPro" id="IPR001041">
    <property type="entry name" value="2Fe-2S_ferredoxin-type"/>
</dbReference>
<dbReference type="InterPro" id="IPR006058">
    <property type="entry name" value="2Fe2S_fd_BS"/>
</dbReference>
<dbReference type="InterPro" id="IPR017896">
    <property type="entry name" value="4Fe4S_Fe-S-bd"/>
</dbReference>
<dbReference type="InterPro" id="IPR017900">
    <property type="entry name" value="4Fe4S_Fe_S_CS"/>
</dbReference>
<dbReference type="InterPro" id="IPR012675">
    <property type="entry name" value="Beta-grasp_dom_sf"/>
</dbReference>
<dbReference type="InterPro" id="IPR009051">
    <property type="entry name" value="Helical_ferredxn"/>
</dbReference>
<dbReference type="InterPro" id="IPR050573">
    <property type="entry name" value="SDH/FRD_Iron-Sulfur"/>
</dbReference>
<dbReference type="InterPro" id="IPR004489">
    <property type="entry name" value="Succ_DH/fum_Rdtase_Fe-S"/>
</dbReference>
<dbReference type="InterPro" id="IPR025192">
    <property type="entry name" value="Succ_DH/fum_Rdtase_N"/>
</dbReference>
<dbReference type="NCBIfam" id="TIGR00384">
    <property type="entry name" value="dhsB"/>
    <property type="match status" value="1"/>
</dbReference>
<dbReference type="NCBIfam" id="NF004616">
    <property type="entry name" value="PRK05950.1"/>
    <property type="match status" value="1"/>
</dbReference>
<dbReference type="PANTHER" id="PTHR11921:SF29">
    <property type="entry name" value="SUCCINATE DEHYDROGENASE [UBIQUINONE] IRON-SULFUR SUBUNIT, MITOCHONDRIAL"/>
    <property type="match status" value="1"/>
</dbReference>
<dbReference type="PANTHER" id="PTHR11921">
    <property type="entry name" value="SUCCINATE DEHYDROGENASE IRON-SULFUR PROTEIN"/>
    <property type="match status" value="1"/>
</dbReference>
<dbReference type="Pfam" id="PF13085">
    <property type="entry name" value="Fer2_3"/>
    <property type="match status" value="1"/>
</dbReference>
<dbReference type="Pfam" id="PF13534">
    <property type="entry name" value="Fer4_17"/>
    <property type="match status" value="1"/>
</dbReference>
<dbReference type="SUPFAM" id="SSF54292">
    <property type="entry name" value="2Fe-2S ferredoxin-like"/>
    <property type="match status" value="1"/>
</dbReference>
<dbReference type="SUPFAM" id="SSF46548">
    <property type="entry name" value="alpha-helical ferredoxin"/>
    <property type="match status" value="1"/>
</dbReference>
<dbReference type="PROSITE" id="PS00197">
    <property type="entry name" value="2FE2S_FER_1"/>
    <property type="match status" value="1"/>
</dbReference>
<dbReference type="PROSITE" id="PS51085">
    <property type="entry name" value="2FE2S_FER_2"/>
    <property type="match status" value="1"/>
</dbReference>
<dbReference type="PROSITE" id="PS00198">
    <property type="entry name" value="4FE4S_FER_1"/>
    <property type="match status" value="1"/>
</dbReference>
<dbReference type="PROSITE" id="PS51379">
    <property type="entry name" value="4FE4S_FER_2"/>
    <property type="match status" value="1"/>
</dbReference>
<keyword id="KW-0001">2Fe-2S</keyword>
<keyword id="KW-0002">3D-structure</keyword>
<keyword id="KW-0003">3Fe-4S</keyword>
<keyword id="KW-0004">4Fe-4S</keyword>
<keyword id="KW-0903">Direct protein sequencing</keyword>
<keyword id="KW-0408">Iron</keyword>
<keyword id="KW-0411">Iron-sulfur</keyword>
<keyword id="KW-0472">Membrane</keyword>
<keyword id="KW-0479">Metal-binding</keyword>
<keyword id="KW-0496">Mitochondrion</keyword>
<keyword id="KW-0999">Mitochondrion inner membrane</keyword>
<keyword id="KW-0560">Oxidoreductase</keyword>
<keyword id="KW-0809">Transit peptide</keyword>
<keyword id="KW-0816">Tricarboxylic acid cycle</keyword>
<gene>
    <name evidence="14" type="primary">SDHB</name>
</gene>
<protein>
    <recommendedName>
        <fullName evidence="4">Succinate dehydrogenase [ubiquinone] iron-sulfur subunit, mitochondrial</fullName>
        <shortName evidence="13">Ip</shortName>
        <ecNumber evidence="5 6 7 9 10 11 12">1.3.5.1</ecNumber>
    </recommendedName>
    <alternativeName>
        <fullName evidence="17">Fumarate reductase iron-sulfur subunit, mitochondrial</fullName>
    </alternativeName>
</protein>
<organism evidence="18">
    <name type="scientific">Ascaris suum</name>
    <name type="common">Pig roundworm</name>
    <name type="synonym">Ascaris lumbricoides</name>
    <dbReference type="NCBI Taxonomy" id="6253"/>
    <lineage>
        <taxon>Eukaryota</taxon>
        <taxon>Metazoa</taxon>
        <taxon>Ecdysozoa</taxon>
        <taxon>Nematoda</taxon>
        <taxon>Chromadorea</taxon>
        <taxon>Rhabditida</taxon>
        <taxon>Spirurina</taxon>
        <taxon>Ascaridomorpha</taxon>
        <taxon>Ascaridoidea</taxon>
        <taxon>Ascarididae</taxon>
        <taxon>Ascaris</taxon>
    </lineage>
</organism>
<evidence type="ECO:0000255" key="1"/>
<evidence type="ECO:0000255" key="2">
    <source>
        <dbReference type="PROSITE-ProRule" id="PRU00465"/>
    </source>
</evidence>
<evidence type="ECO:0000255" key="3">
    <source>
        <dbReference type="PROSITE-ProRule" id="PRU00711"/>
    </source>
</evidence>
<evidence type="ECO:0000255" key="4">
    <source>
        <dbReference type="RuleBase" id="RU361237"/>
    </source>
</evidence>
<evidence type="ECO:0000269" key="5">
    <source>
    </source>
</evidence>
<evidence type="ECO:0000269" key="6">
    <source>
    </source>
</evidence>
<evidence type="ECO:0000269" key="7">
    <source>
    </source>
</evidence>
<evidence type="ECO:0000269" key="8">
    <source>
    </source>
</evidence>
<evidence type="ECO:0000269" key="9">
    <source>
    </source>
</evidence>
<evidence type="ECO:0000269" key="10">
    <source>
    </source>
</evidence>
<evidence type="ECO:0000269" key="11">
    <source>
    </source>
</evidence>
<evidence type="ECO:0000269" key="12">
    <source>
    </source>
</evidence>
<evidence type="ECO:0000303" key="13">
    <source>
    </source>
</evidence>
<evidence type="ECO:0000303" key="14">
    <source>
    </source>
</evidence>
<evidence type="ECO:0000305" key="15"/>
<evidence type="ECO:0000305" key="16">
    <source>
    </source>
</evidence>
<evidence type="ECO:0000305" key="17">
    <source>
    </source>
</evidence>
<evidence type="ECO:0000312" key="18">
    <source>
        <dbReference type="EMBL" id="BAA23716.1"/>
    </source>
</evidence>
<evidence type="ECO:0007744" key="19">
    <source>
        <dbReference type="PDB" id="3VR8"/>
    </source>
</evidence>
<evidence type="ECO:0007744" key="20">
    <source>
        <dbReference type="PDB" id="3VR9"/>
    </source>
</evidence>
<evidence type="ECO:0007744" key="21">
    <source>
        <dbReference type="PDB" id="3VRA"/>
    </source>
</evidence>
<evidence type="ECO:0007744" key="22">
    <source>
        <dbReference type="PDB" id="3VRB"/>
    </source>
</evidence>
<evidence type="ECO:0007744" key="23">
    <source>
        <dbReference type="PDB" id="4YSX"/>
    </source>
</evidence>
<evidence type="ECO:0007744" key="24">
    <source>
        <dbReference type="PDB" id="4YSY"/>
    </source>
</evidence>
<evidence type="ECO:0007744" key="25">
    <source>
        <dbReference type="PDB" id="4YSZ"/>
    </source>
</evidence>
<evidence type="ECO:0007744" key="26">
    <source>
        <dbReference type="PDB" id="4YT0"/>
    </source>
</evidence>
<evidence type="ECO:0007744" key="27">
    <source>
        <dbReference type="PDB" id="4YTM"/>
    </source>
</evidence>
<evidence type="ECO:0007744" key="28">
    <source>
        <dbReference type="PDB" id="4YTN"/>
    </source>
</evidence>
<evidence type="ECO:0007744" key="29">
    <source>
        <dbReference type="PDB" id="5C2T"/>
    </source>
</evidence>
<evidence type="ECO:0007744" key="30">
    <source>
        <dbReference type="PDB" id="5C3J"/>
    </source>
</evidence>
<evidence type="ECO:0007829" key="31">
    <source>
        <dbReference type="PDB" id="3VR8"/>
    </source>
</evidence>
<evidence type="ECO:0007829" key="32">
    <source>
        <dbReference type="PDB" id="3VRA"/>
    </source>
</evidence>
<evidence type="ECO:0007829" key="33">
    <source>
        <dbReference type="PDB" id="3VRB"/>
    </source>
</evidence>
<evidence type="ECO:0007829" key="34">
    <source>
        <dbReference type="PDB" id="4YSX"/>
    </source>
</evidence>
<sequence length="282" mass="31633">MLRGSTSVCRSLELVTQAARYASAATAAAPTGKRIKTFEIYRFNPEEPGAKPKLQKFDVDLDKCGTMVLDALIKIKNEVDPTLTFRRSCREGICGSCAMNIAGENTLACICNIDQNTSKTTKIYPLPHMFVIKDLVPDMNLFYAQYASIQPWLQKKTKINLGEKQQYQSIKEQEKLDGLYECILCACCSASCPSYWWNADKYLGPAVLMQAYRWIIDSRDDSAAERLARMQDGFSAFKCHTIMNCTKTCPKHLNPARAIGEIKMLLTKMKTKPAPLPTPANF</sequence>
<comment type="function">
    <text evidence="5 6 7 10 11 12">Iron-sulfur protein (Ip) subunit of the mitochondrial electron transport chain complex II which, together with the flavoprotein (Fp) subunit forms the catalytic core of the complex (PubMed:10743611, PubMed:12742584, PubMed:17933581, PubMed:2843227, PubMed:7822332, PubMed:8435436). During the free-living egg-larvae stages, which occur in an aerobic environment, complex II acts as a succinate dehydrogenase by transferring electrons from succinate to ubiquinone (PubMed:10743611, PubMed:12742584, PubMed:17933581, PubMed:2843227, PubMed:7822332, PubMed:8435436). During the parasitic larvae and adult stages, which occur in an anaerobic environment, complex II acts as a fumarate reductase by transferring electrons from rhodoquinol to fumarate (PubMed:10743611, PubMed:12742584, PubMed:17933581, PubMed:2843227, PubMed:7822332, PubMed:8435436).</text>
</comment>
<comment type="catalytic activity">
    <reaction evidence="5 6 7 9 10 11 12">
        <text>a ubiquinone + succinate = a ubiquinol + fumarate</text>
        <dbReference type="Rhea" id="RHEA:13713"/>
        <dbReference type="Rhea" id="RHEA-COMP:9565"/>
        <dbReference type="Rhea" id="RHEA-COMP:9566"/>
        <dbReference type="ChEBI" id="CHEBI:16389"/>
        <dbReference type="ChEBI" id="CHEBI:17976"/>
        <dbReference type="ChEBI" id="CHEBI:29806"/>
        <dbReference type="ChEBI" id="CHEBI:30031"/>
        <dbReference type="EC" id="1.3.5.1"/>
    </reaction>
    <physiologicalReaction direction="left-to-right" evidence="5 6 7 9 11 12">
        <dbReference type="Rhea" id="RHEA:13714"/>
    </physiologicalReaction>
</comment>
<comment type="catalytic activity">
    <reaction evidence="5 6 7 10 11 12">
        <text>a rhodoquinone + succinate = a rhodoquinol + fumarate</text>
        <dbReference type="Rhea" id="RHEA:75711"/>
        <dbReference type="Rhea" id="RHEA-COMP:18569"/>
        <dbReference type="Rhea" id="RHEA-COMP:18570"/>
        <dbReference type="ChEBI" id="CHEBI:29806"/>
        <dbReference type="ChEBI" id="CHEBI:30031"/>
        <dbReference type="ChEBI" id="CHEBI:194432"/>
        <dbReference type="ChEBI" id="CHEBI:194433"/>
        <dbReference type="EC" id="1.3.5.1"/>
    </reaction>
    <physiologicalReaction direction="right-to-left" evidence="5 6 7 10 11 12">
        <dbReference type="Rhea" id="RHEA:75713"/>
    </physiologicalReaction>
</comment>
<comment type="cofactor">
    <cofactor evidence="4">
        <name>[2Fe-2S] cluster</name>
        <dbReference type="ChEBI" id="CHEBI:190135"/>
    </cofactor>
    <text evidence="4 8 9">Binds 1 [2Fe-2S] cluster.</text>
</comment>
<comment type="cofactor">
    <cofactor evidence="4">
        <name>[3Fe-4S] cluster</name>
        <dbReference type="ChEBI" id="CHEBI:21137"/>
    </cofactor>
    <text evidence="4 8 9">Binds 1 [3Fe-4S] cluster.</text>
</comment>
<comment type="cofactor">
    <cofactor evidence="4">
        <name>[4Fe-4S] cluster</name>
        <dbReference type="ChEBI" id="CHEBI:49883"/>
    </cofactor>
    <text evidence="4 8 9">Binds 1 [4Fe-4S] cluster.</text>
</comment>
<comment type="activity regulation">
    <text evidence="9">Inhibited by the fungicide flutolanil.</text>
</comment>
<comment type="biophysicochemical properties">
    <kinetics>
        <KM evidence="10">3.09 mM for fumarate (adult complex II, at 25 degrees Celsius and in anaerobic conditions)</KM>
        <KM evidence="12">190 uM for succinate (free larvae complex II, at 25 degrees Celsius)</KM>
        <KM evidence="12">740 uM for succinate (adult complex II, at 25 degrees Celsius)</KM>
        <KM evidence="12">31 uM for fumarate (adult complex II, at 25 degrees Celsius)</KM>
        <KM evidence="12">150 uM for fumarate (free larvae complex II, at 25 degrees Celsius)</KM>
        <KM evidence="11">608 uM for succinate (adult complex II, at 25 degrees Celsius)</KM>
        <KM evidence="11">3 uM for ubquinone-1 (adult and larval complex II, succinate as cosubstrate and at 25 degrees Celsius)</KM>
        <KM evidence="11">143 uM for fumarate (adult complex II, at 25 degrees Celsius)</KM>
        <KM evidence="11">153 uM for succinate (free larvae complex II, at 25 degrees Celsius)</KM>
        <KM evidence="11">455 uM for fumarate (free larvae complex II, at 25 degrees Celsius)</KM>
        <KM evidence="6">28.5 uM for fumarate (free larvae complex II, n-decyl-rhodoquinol as cosubstrate)</KM>
        <KM evidence="6">47.3 uM for n-decyl-rhodoquinol (free larvae complex II, fumarate as cosubstrate)</KM>
        <KM evidence="6">385 uM for succinate (free larvae complex II, n-decyl-ubiquinone as cosubstrate)</KM>
        <KM evidence="6">12 uM for n-decyl-ubiquinone (free larvae complex II, succinate as cosubstrate)</KM>
        <KM evidence="6">16.6 uM for fumarate (adult complex II, n-decyl-rhodoquinol as cosubstrate)</KM>
        <KM evidence="6">40.6 uM for n-decyl-rhodoquinol (free larvae complex II, fumarate as cosubstrate)</KM>
        <KM evidence="6">625 uM for succinate (adult complex II, n-decyl-ubiquinone as cosubstrate)</KM>
        <KM evidence="6">11.4 uM for n-decyl-ubiquinone (adult complex II, succinate as cosubstrate)</KM>
        <Vmax evidence="10">49.0 umol/min/mg enzyme toward fumarate (adult complex II, at 25 degrees Celsius and in anaerobic conditions)</Vmax>
        <Vmax evidence="6">2.99 umol/min/mg enzyme toward fumarate (free larvae complex II, n-decyl-rhodoquinol as cosubstrate)</Vmax>
        <Vmax evidence="6">7.53 umol/min/mg enzyme toward succinate (free larvae complex II, n-decyl-ubiquinone as cosubstrate)</Vmax>
        <Vmax evidence="6">0.89 umol/min/mg enzyme toward fumarate (adult complex II, n-decyl-rhodoquinol as cosubstrate)</Vmax>
        <Vmax evidence="6">1.39 umol/min/mg enzyme toward succinate (adult complex II, n-decyl-ubiquinone as cosubstrate)</Vmax>
        <text evidence="10">kcat is 6000 min(-1) with fumarate as substrate (adult complex II, at 25 degrees Celsius and in anaerobic conditions).</text>
    </kinetics>
    <phDependence>
        <text evidence="10">Optimum pH is 7.5.</text>
    </phDependence>
</comment>
<comment type="pathway">
    <text evidence="4 11">Carbohydrate metabolism; tricarboxylic acid cycle; fumarate from succinate (eukaryal route): step 1/1.</text>
</comment>
<comment type="subunit">
    <text evidence="5 6 7 8 9 10 11 12">Component of the mitochondrial electron transport chain complex II composed of four subunits: a flavoprotein (Fp), an iron-sulfur protein (Ip), and a large cytochrome b (CybL) subunit and a small cytochrome b (CybS) subunit (PubMed:10743611, PubMed:12742584, PubMed:17933581, PubMed:22577165, PubMed:26198225, PubMed:2843227, PubMed:7822332, PubMed:8435436). There are 2 developmental stage-specific forms of complex II which have the Ip and CybL subunits in common (PubMed:10743611, PubMed:12742584, PubMed:17933581, PubMed:7822332). Complex II from the free-living larvae (aerobic environment) acts as a succinate dehydrogenase and is composed of the common subunit Ip and CybL and the stage specific subunits FpL and CybSL (PubMed:10743611, PubMed:12742584, PubMed:17933581, PubMed:7822332). Complex II from parasitic larvae and adults (anaerobic environment) acts as a fumarate reductase and is composed of the common subunit Ip and CybL and the stage specific subunits FpA and CybSA (PubMed:10743611, PubMed:12742584, PubMed:17933581, PubMed:7822332).</text>
</comment>
<comment type="subcellular location">
    <subcellularLocation>
        <location evidence="4 5 6 7 8 9 10 11 12">Mitochondrion inner membrane</location>
        <topology evidence="4">Peripheral membrane protein</topology>
        <orientation evidence="4">Matrix side</orientation>
    </subcellularLocation>
</comment>
<comment type="tissue specificity">
    <text evidence="5 6 8 10 11 12">Expressed in adult muscles (at protein level).</text>
</comment>
<comment type="developmental stage">
    <text evidence="5 6 8 9 10 11 12">Expressed at larval stages L2, L3, lung L3 and in adults (at protein level).</text>
</comment>
<comment type="similarity">
    <text evidence="4">Belongs to the succinate dehydrogenase/fumarate reductase iron-sulfur protein family.</text>
</comment>
<name>SDHB_ASCSU</name>
<proteinExistence type="evidence at protein level"/>
<reference evidence="18" key="1">
    <citation type="journal article" date="2000" name="Mol. Biochem. Parasitol.">
        <title>Stage-specific isoforms of Ascaris suum complex. II: The fumarate reductase of the parasitic adult and the succinate dehydrogenase of free-living larvae share a common iron-sulfur subunit.</title>
        <authorList>
            <person name="Amino H."/>
            <person name="Wang H."/>
            <person name="Hirawake H."/>
            <person name="Saruta F."/>
            <person name="Mizuchi D."/>
            <person name="Mineki R."/>
            <person name="Shindo N."/>
            <person name="Murayama K."/>
            <person name="Takamiya S."/>
            <person name="Aoki T."/>
            <person name="Kojima S."/>
            <person name="Kita K."/>
        </authorList>
    </citation>
    <scope>NUCLEOTIDE SEQUENCE [MRNA]</scope>
    <scope>PROTEIN SEQUENCE OF 22-64</scope>
    <scope>FUNCTION</scope>
    <scope>CATALYTIC ACTIVITY</scope>
    <scope>IDENTIFICATION IN THE MITOCHONDRIAL RESPIRATORY CHAIN COMPLEX II</scope>
    <scope>SUBCELLULAR LOCATION</scope>
    <scope>TISSUE SPECIFICITY</scope>
    <scope>DEVELOPMENTAL STAGE</scope>
    <source>
        <tissue evidence="18">Muscle</tissue>
    </source>
</reference>
<reference evidence="15" key="2">
    <citation type="journal article" date="1988" name="Biochim. Biophys. Acta">
        <title>Electron-transfer complexes of Ascaris suum muscle mitochondria. III. Composition and fumarate reductase activity of complex II.</title>
        <authorList>
            <person name="Kita K."/>
            <person name="Takamiya S."/>
            <person name="Furushima R."/>
            <person name="Ma Y.C."/>
            <person name="Suzuki H."/>
            <person name="Ozawa T."/>
            <person name="Oya H."/>
        </authorList>
    </citation>
    <scope>FUNCTION</scope>
    <scope>CATALYTIC ACTIVITY</scope>
    <scope>BIOPHYSICOCHEMICAL PROPERTIES</scope>
    <scope>IDENTIFICATION IN THE MITOCHONDRIAL RESPIRATORY CHAIN COMPLEX II</scope>
    <scope>SUBCELLULAR LOCATION</scope>
    <scope>TISSUE SPECIFICITY</scope>
    <scope>DEVELOPMENTAL STAGE</scope>
</reference>
<reference evidence="15" key="3">
    <citation type="journal article" date="1993" name="Biochim. Biophys. Acta">
        <title>Developmental changes in the respiratory chain of Ascaris mitochondria.</title>
        <authorList>
            <person name="Takamiya S."/>
            <person name="Kita K."/>
            <person name="Wang H."/>
            <person name="Weinstein P.P."/>
            <person name="Hiraishi A."/>
            <person name="Oya H."/>
            <person name="Aoki T."/>
        </authorList>
    </citation>
    <scope>FUNCTION</scope>
    <scope>CATALYTIC ACTIVITY</scope>
    <scope>BIOPHYSICOCHEMICAL PROPERTIES</scope>
    <scope>IDENTIFICATION IN THE MITOCHONDRIAL RESPIRATORY CHAIN COMPLEX II</scope>
    <scope>SUBCELLULAR LOCATION</scope>
    <scope>TISSUE SPECIFICITY</scope>
    <scope>DEVELOPMENTAL STAGE</scope>
</reference>
<reference evidence="15" key="4">
    <citation type="journal article" date="1995" name="J. Biol. Chem.">
        <title>Stage-specific isoforms of complex II (succinate-ubiquinone oxidoreductase) in mitochondria from the parasitic nematode, Ascaris suum.</title>
        <authorList>
            <person name="Saruta F."/>
            <person name="Kuramochi T."/>
            <person name="Nakamura K."/>
            <person name="Takamiya S."/>
            <person name="Yu Y."/>
            <person name="Aoki T."/>
            <person name="Sekimizu K."/>
            <person name="Kojima S."/>
            <person name="Kita K."/>
        </authorList>
    </citation>
    <scope>FUNCTION</scope>
    <scope>CATALYTIC ACTIVITY</scope>
    <scope>BIOPHYSICOCHEMICAL PROPERTIES</scope>
    <scope>PATHWAY</scope>
    <scope>IDENTIFICATION IN THE MITOCHONDRIAL RESPIRATORY CHAIN COMPLEX II</scope>
    <scope>SUBCELLULAR LOCATION</scope>
    <scope>TISSUE SPECIFICITY</scope>
    <scope>DEVELOPMENTAL STAGE</scope>
</reference>
<reference evidence="15" key="5">
    <citation type="journal article" date="2003" name="Mol. Biochem. Parasitol.">
        <title>Isolation and characterization of the stage-specific cytochrome b small subunit (CybS) of Ascaris suum complex II from the aerobic respiratory chain of larval mitochondria.</title>
        <authorList>
            <person name="Amino H."/>
            <person name="Osanai A."/>
            <person name="Miyadera H."/>
            <person name="Shinjyo N."/>
            <person name="Tomitsuka E."/>
            <person name="Taka H."/>
            <person name="Mineki R."/>
            <person name="Murayama K."/>
            <person name="Takamiya S."/>
            <person name="Aoki T."/>
            <person name="Miyoshi H."/>
            <person name="Sakamoto K."/>
            <person name="Kojima S."/>
            <person name="Kita K."/>
        </authorList>
    </citation>
    <scope>FUNCTION</scope>
    <scope>CATALYTIC ACTIVITY</scope>
    <scope>BIOPHYSICOCHEMICAL PROPERTIES</scope>
    <scope>IDENTIFICATION IN THE MITOCHONDRIAL RESPIRATORY CHAIN COMPLEX II</scope>
    <scope>SUBCELLULAR LOCATION</scope>
    <scope>TISSUE SPECIFICITY</scope>
    <scope>DEVELOPMENTAL STAGE</scope>
</reference>
<reference evidence="15" key="6">
    <citation type="journal article" date="2008" name="Parasitol. Int.">
        <title>Change of subunit composition of mitochondrial complex II (succinate-ubiquinone reductase/quinol-fumarate reductase) in Ascaris suum during the migration in the experimental host.</title>
        <authorList>
            <person name="Iwata F."/>
            <person name="Shinjyo N."/>
            <person name="Amino H."/>
            <person name="Sakamoto K."/>
            <person name="Islam M.K."/>
            <person name="Tsuji N."/>
            <person name="Kita K."/>
        </authorList>
    </citation>
    <scope>FUNCTION</scope>
    <scope>CATALYTIC ACTIVITY</scope>
    <scope>IDENTIFICATION IN THE MITOCHONDRIAL RESPIRATORY CHAIN COMPLEX II</scope>
    <scope>SUBCELLULAR LOCATION</scope>
</reference>
<reference evidence="19 20 21 22" key="7">
    <citation type="journal article" date="2012" name="J. Biochem.">
        <title>Crystal structure of mitochondrial quinol-fumarate reductase from the parasitic nematode Ascaris suum.</title>
        <authorList>
            <person name="Shimizu H."/>
            <person name="Osanai A."/>
            <person name="Sakamoto K."/>
            <person name="Inaoka D.K."/>
            <person name="Shiba T."/>
            <person name="Harada S."/>
            <person name="Kita K."/>
        </authorList>
    </citation>
    <scope>X-RAY CRYSTALLOGRAPHY (2.81 ANGSTROMS) IN COMPLEX WITH IRON-SULFUR (2FE-2S); IRON-SULFUR (3FE-4S); IRON-SULFUR (4FE-4S); RHODOQUINONE ANALOG; FP; CYBL AND CYBS</scope>
    <scope>COFACTOR</scope>
    <scope>IDENTIFICATION IN THE MITOCHONDRIAL RESPIRATORY CHAIN COMPLEX II</scope>
    <scope>SUBCELLULAR LOCATION</scope>
    <scope>TISSUE SPECIFICITY</scope>
    <scope>DEVELOPMENTAL STAGE</scope>
</reference>
<reference evidence="23 24 25 26 27 28 29 30" key="8">
    <citation type="journal article" date="2015" name="Int. J. Mol. Sci.">
        <title>Structural Insights into the Molecular Design of Flutolanil Derivatives Targeted for Fumarate Respiration of Parasite Mitochondria.</title>
        <authorList>
            <person name="Inaoka D.K."/>
            <person name="Shiba T."/>
            <person name="Sato D."/>
            <person name="Balogun E.O."/>
            <person name="Sasaki T."/>
            <person name="Nagahama M."/>
            <person name="Oda M."/>
            <person name="Matsuoka S."/>
            <person name="Ohmori J."/>
            <person name="Honma T."/>
            <person name="Inoue M."/>
            <person name="Kita K."/>
            <person name="Harada S."/>
        </authorList>
    </citation>
    <scope>X-RAY CRYSTALLOGRAPHY (2.25 ANGSTROMS) IN COMPLEX WITH IRON-SULFUR (2FE-2S); IRON-SULFUR (3FE-4S); IRON-SULFUR (4FE-4S); FP; CYBS; CYBL AND INHIBITOR</scope>
    <scope>CATALYTIC ACTIVITY</scope>
    <scope>COFACTOR</scope>
    <scope>ACTIVITY REGULATION</scope>
    <scope>IDENTIFICATION IN THE MITOCHONDRIAL RESPIRATORY CHAIN COMPLEX II</scope>
    <scope>SUBCELLULAR LOCATION</scope>
    <scope>TISSUE SPECIFICITY</scope>
</reference>
<accession>O44074</accession>